<dbReference type="EMBL" id="L27485">
    <property type="protein sequence ID" value="AAA27710.1"/>
    <property type="molecule type" value="mRNA"/>
</dbReference>
<dbReference type="PIR" id="B48405">
    <property type="entry name" value="B48405"/>
</dbReference>
<dbReference type="PDB" id="1PRQ">
    <property type="method" value="X-ray"/>
    <property type="resolution" value="2.50 A"/>
    <property type="chains" value="A=2-126"/>
</dbReference>
<dbReference type="PDB" id="2PRF">
    <property type="method" value="NMR"/>
    <property type="chains" value="A=2-126"/>
</dbReference>
<dbReference type="PDBsum" id="1PRQ"/>
<dbReference type="PDBsum" id="2PRF"/>
<dbReference type="BMRB" id="P68696"/>
<dbReference type="SMR" id="P68696"/>
<dbReference type="VEuPathDB" id="AmoebaDB:ACA1_396950"/>
<dbReference type="OMA" id="YICLYAE"/>
<dbReference type="EvolutionaryTrace" id="P68696"/>
<dbReference type="GO" id="GO:0015629">
    <property type="term" value="C:actin cytoskeleton"/>
    <property type="evidence" value="ECO:0000314"/>
    <property type="project" value="UniProtKB"/>
</dbReference>
<dbReference type="GO" id="GO:0005938">
    <property type="term" value="C:cell cortex"/>
    <property type="evidence" value="ECO:0007669"/>
    <property type="project" value="TreeGrafter"/>
</dbReference>
<dbReference type="GO" id="GO:0003785">
    <property type="term" value="F:actin monomer binding"/>
    <property type="evidence" value="ECO:0000315"/>
    <property type="project" value="UniProtKB"/>
</dbReference>
<dbReference type="GO" id="GO:0030036">
    <property type="term" value="P:actin cytoskeleton organization"/>
    <property type="evidence" value="ECO:0000315"/>
    <property type="project" value="UniProtKB"/>
</dbReference>
<dbReference type="CDD" id="cd00148">
    <property type="entry name" value="PROF"/>
    <property type="match status" value="1"/>
</dbReference>
<dbReference type="FunFam" id="3.30.450.30:FF:000001">
    <property type="entry name" value="Profilin"/>
    <property type="match status" value="1"/>
</dbReference>
<dbReference type="Gene3D" id="3.30.450.30">
    <property type="entry name" value="Dynein light chain 2a, cytoplasmic"/>
    <property type="match status" value="1"/>
</dbReference>
<dbReference type="InterPro" id="IPR048278">
    <property type="entry name" value="PFN"/>
</dbReference>
<dbReference type="InterPro" id="IPR005455">
    <property type="entry name" value="PFN_euk"/>
</dbReference>
<dbReference type="InterPro" id="IPR036140">
    <property type="entry name" value="PFN_sf"/>
</dbReference>
<dbReference type="InterPro" id="IPR027310">
    <property type="entry name" value="Profilin_CS"/>
</dbReference>
<dbReference type="PANTHER" id="PTHR11604">
    <property type="entry name" value="PROFILIN"/>
    <property type="match status" value="1"/>
</dbReference>
<dbReference type="PANTHER" id="PTHR11604:SF0">
    <property type="entry name" value="PROFILIN"/>
    <property type="match status" value="1"/>
</dbReference>
<dbReference type="Pfam" id="PF00235">
    <property type="entry name" value="Profilin"/>
    <property type="match status" value="1"/>
</dbReference>
<dbReference type="PRINTS" id="PR00392">
    <property type="entry name" value="PROFILIN"/>
</dbReference>
<dbReference type="PRINTS" id="PR01640">
    <property type="entry name" value="PROFILINPLNT"/>
</dbReference>
<dbReference type="SMART" id="SM00392">
    <property type="entry name" value="PROF"/>
    <property type="match status" value="1"/>
</dbReference>
<dbReference type="SUPFAM" id="SSF55770">
    <property type="entry name" value="Profilin (actin-binding protein)"/>
    <property type="match status" value="1"/>
</dbReference>
<dbReference type="PROSITE" id="PS00414">
    <property type="entry name" value="PROFILIN"/>
    <property type="match status" value="1"/>
</dbReference>
<proteinExistence type="evidence at protein level"/>
<accession>P68696</accession>
<accession>P07763</accession>
<organism>
    <name type="scientific">Acanthamoeba castellanii</name>
    <name type="common">Amoeba</name>
    <dbReference type="NCBI Taxonomy" id="5755"/>
    <lineage>
        <taxon>Eukaryota</taxon>
        <taxon>Amoebozoa</taxon>
        <taxon>Discosea</taxon>
        <taxon>Longamoebia</taxon>
        <taxon>Centramoebida</taxon>
        <taxon>Acanthamoebidae</taxon>
        <taxon>Acanthamoeba</taxon>
    </lineage>
</organism>
<comment type="function">
    <text>Binds to actin and affects the structure of the cytoskeleton. At high concentrations, profilin prevents the polymerization of actin, whereas it enhances it at low concentrations. By binding to PIP2, it inhibits the formation of IP3 and DG.</text>
</comment>
<comment type="subunit">
    <text>Occurs in many kinds of cells as a complex with monomeric actin in a 1:1 ratio.</text>
</comment>
<comment type="subcellular location">
    <subcellularLocation>
        <location>Cytoplasm</location>
        <location>Cytoskeleton</location>
    </subcellularLocation>
</comment>
<comment type="similarity">
    <text evidence="4">Belongs to the profilin family.</text>
</comment>
<name>PRO1A_ACACA</name>
<evidence type="ECO:0000255" key="1"/>
<evidence type="ECO:0000269" key="2">
    <source>
    </source>
</evidence>
<evidence type="ECO:0000269" key="3">
    <source>
    </source>
</evidence>
<evidence type="ECO:0000305" key="4"/>
<evidence type="ECO:0007829" key="5">
    <source>
        <dbReference type="PDB" id="1PRQ"/>
    </source>
</evidence>
<sequence>MSWQTYVDTNLVGTGAVTQAAILGLDGNTWATSAGFAVTPAQGQTLASAFNNADPIRASGFDLAGVHYVTLRADDRSIYGKKGSAGVITVKTSKSILVGVYNEKIQPGTAANVVEKLADYLIGQGF</sequence>
<feature type="initiator methionine" description="Removed" evidence="3">
    <location>
        <position position="1"/>
    </location>
</feature>
<feature type="chain" id="PRO_0000199583" description="Profilin-1A">
    <location>
        <begin position="2"/>
        <end position="126"/>
    </location>
</feature>
<feature type="region of interest" description="Actin binding" evidence="1">
    <location>
        <begin position="2"/>
        <end position="36"/>
    </location>
</feature>
<feature type="site" description="Actin binding">
    <location>
        <position position="116"/>
    </location>
</feature>
<feature type="modified residue" description="N6,N6,N6-trimethyllysine" evidence="2">
    <location>
        <position position="104"/>
    </location>
</feature>
<feature type="sequence conflict" description="In Ref. 2; AA sequence." evidence="4" ref="2">
    <original>S</original>
    <variation>T</variation>
    <location>
        <position position="2"/>
    </location>
</feature>
<feature type="sequence conflict" description="In Ref. 2; AA sequence." evidence="4" ref="2">
    <original>T</original>
    <variation>S</variation>
    <location>
        <position position="5"/>
    </location>
</feature>
<feature type="sequence conflict" description="In Ref. 2; AA sequence." evidence="4" ref="2">
    <original>TS</original>
    <variation>SF</variation>
    <location>
        <begin position="32"/>
        <end position="33"/>
    </location>
</feature>
<feature type="helix" evidence="5">
    <location>
        <begin position="3"/>
        <end position="8"/>
    </location>
</feature>
<feature type="turn" evidence="5">
    <location>
        <begin position="9"/>
        <end position="11"/>
    </location>
</feature>
<feature type="helix" evidence="5">
    <location>
        <begin position="12"/>
        <end position="14"/>
    </location>
</feature>
<feature type="strand" evidence="5">
    <location>
        <begin position="18"/>
        <end position="24"/>
    </location>
</feature>
<feature type="strand" evidence="5">
    <location>
        <begin position="29"/>
        <end position="32"/>
    </location>
</feature>
<feature type="helix" evidence="5">
    <location>
        <begin position="40"/>
        <end position="49"/>
    </location>
</feature>
<feature type="helix" evidence="5">
    <location>
        <begin position="54"/>
        <end position="57"/>
    </location>
</feature>
<feature type="strand" evidence="5">
    <location>
        <begin position="61"/>
        <end position="63"/>
    </location>
</feature>
<feature type="strand" evidence="5">
    <location>
        <begin position="66"/>
        <end position="73"/>
    </location>
</feature>
<feature type="strand" evidence="5">
    <location>
        <begin position="75"/>
        <end position="82"/>
    </location>
</feature>
<feature type="strand" evidence="5">
    <location>
        <begin position="85"/>
        <end position="91"/>
    </location>
</feature>
<feature type="strand" evidence="5">
    <location>
        <begin position="93"/>
        <end position="101"/>
    </location>
</feature>
<feature type="helix" evidence="5">
    <location>
        <begin position="107"/>
        <end position="123"/>
    </location>
</feature>
<protein>
    <recommendedName>
        <fullName>Profilin-1A</fullName>
    </recommendedName>
    <alternativeName>
        <fullName>Acidic profilin IA</fullName>
    </alternativeName>
    <alternativeName>
        <fullName>Profilin IA</fullName>
    </alternativeName>
</protein>
<keyword id="KW-0002">3D-structure</keyword>
<keyword id="KW-0009">Actin-binding</keyword>
<keyword id="KW-0963">Cytoplasm</keyword>
<keyword id="KW-0206">Cytoskeleton</keyword>
<keyword id="KW-0903">Direct protein sequencing</keyword>
<keyword id="KW-0488">Methylation</keyword>
<reference key="1">
    <citation type="journal article" date="1991" name="Cell Motil. Cytoskeleton">
        <title>Analysis of cDNA clones for Acanthamoeba profilin-I and profilin-II shows end to end homology with vertebrate profilins and a small family of profilin genes.</title>
        <authorList>
            <person name="Pollard T.D."/>
            <person name="Rimm D.L."/>
        </authorList>
    </citation>
    <scope>NUCLEOTIDE SEQUENCE [MRNA]</scope>
    <scope>METHYLATION AT LYS-104</scope>
</reference>
<reference key="2">
    <citation type="journal article" date="1985" name="J. Biol. Chem.">
        <title>The amino acid sequence of Acanthamoeba profilin.</title>
        <authorList>
            <person name="Ampe C."/>
            <person name="Vandekerckhove J."/>
            <person name="Brenner S.L."/>
            <person name="Tobacman L."/>
            <person name="Korn E.D."/>
        </authorList>
    </citation>
    <scope>PROTEIN SEQUENCE OF 2-126</scope>
</reference>
<reference key="3">
    <citation type="journal article" date="1989" name="J. Cell Biol.">
        <title>Acanthamoeba actin and profilin can be cross-linked between glutamic acid 364 of actin and lysine 115 of profilin.</title>
        <authorList>
            <person name="Vandekerckhove J."/>
            <person name="Kaiser D.A."/>
            <person name="Pollard T.D."/>
        </authorList>
    </citation>
    <scope>CROSS-LINKING TO ACTIN</scope>
</reference>
<reference key="4">
    <citation type="journal article" date="1998" name="J. Struct. Biol.">
        <title>Crystal packing induces a conformational change in profilin-I from Acanthamoeba castellanii.</title>
        <authorList>
            <person name="Liu S."/>
            <person name="Fedorov A.A."/>
            <person name="Pollard T.D."/>
            <person name="Lattman E.E."/>
            <person name="Almo S.C."/>
            <person name="Magnus K.A."/>
        </authorList>
    </citation>
    <scope>X-RAY CRYSTALLOGRAPHY (2.5 ANGSTROMS)</scope>
</reference>
<reference key="5">
    <citation type="journal article" date="1993" name="J. Cell Biol.">
        <title>Three-dimensional solution structure of Acanthamoeba profilin-I.</title>
        <authorList>
            <person name="Vinson V.K."/>
            <person name="Archer S.J."/>
            <person name="Lattman E.E."/>
            <person name="Pollard T.D."/>
            <person name="Torchia D.A."/>
        </authorList>
    </citation>
    <scope>STRUCTURE BY NMR</scope>
</reference>
<reference key="6">
    <citation type="journal article" date="1993" name="Biochemistry">
        <title>Secondary structure and topology of Acanthamoeba profilin I as determined by heteronuclear nuclear magnetic resonance spectroscopy.</title>
        <authorList>
            <person name="Archer S.J."/>
            <person name="Vinson V.K."/>
            <person name="Pollard T.D."/>
            <person name="Torchia D.A."/>
        </authorList>
    </citation>
    <scope>STRUCTURE BY NMR</scope>
</reference>